<name>HISZ_SACD2</name>
<sequence length="394" mass="43351">MKKVDRWLLPDGIEEVLPEEASRVEGLRRRLVDLFQSWGYDYVIPPMVEFIDSLLTGSGEDAYLDTFKITDQLSGKTMGIRADITPQAARMDAHSLQREGLNRLCYAGHVMYTKPKGPLASRTPIQVGVELFGESGLDADIEVISLLLETLEAAGLPDLYIDIGHVGVYRALIEEAGISKEQEEVYFELLQAKSINSIESWVANNITDAKMAEWLLALPRLAGGNHILAEAKALFEDAPAEVSAAIDELEMIDSVLTERYPHSKRYFDLSELRGYHYYTGVIFGAFAPGLGNAIANGGRYDHVGEAFGRARAATGFAADLMSISRVTGRCELAPSGIYVEDSDADGIWAKIKQLRASGERVVCALAGQTAPYKHQHCNRKLIKQGEEFVVAPIK</sequence>
<reference key="1">
    <citation type="journal article" date="2008" name="PLoS Genet.">
        <title>Complete genome sequence of the complex carbohydrate-degrading marine bacterium, Saccharophagus degradans strain 2-40 T.</title>
        <authorList>
            <person name="Weiner R.M."/>
            <person name="Taylor L.E. II"/>
            <person name="Henrissat B."/>
            <person name="Hauser L."/>
            <person name="Land M."/>
            <person name="Coutinho P.M."/>
            <person name="Rancurel C."/>
            <person name="Saunders E.H."/>
            <person name="Longmire A.G."/>
            <person name="Zhang H."/>
            <person name="Bayer E.A."/>
            <person name="Gilbert H.J."/>
            <person name="Larimer F."/>
            <person name="Zhulin I.B."/>
            <person name="Ekborg N.A."/>
            <person name="Lamed R."/>
            <person name="Richardson P.M."/>
            <person name="Borovok I."/>
            <person name="Hutcheson S."/>
        </authorList>
    </citation>
    <scope>NUCLEOTIDE SEQUENCE [LARGE SCALE GENOMIC DNA]</scope>
    <source>
        <strain>2-40 / ATCC 43961 / DSM 17024</strain>
    </source>
</reference>
<evidence type="ECO:0000255" key="1">
    <source>
        <dbReference type="HAMAP-Rule" id="MF_00125"/>
    </source>
</evidence>
<dbReference type="EMBL" id="CP000282">
    <property type="protein sequence ID" value="ABD81922.1"/>
    <property type="molecule type" value="Genomic_DNA"/>
</dbReference>
<dbReference type="RefSeq" id="WP_011469139.1">
    <property type="nucleotide sequence ID" value="NC_007912.1"/>
</dbReference>
<dbReference type="SMR" id="Q21HA7"/>
<dbReference type="STRING" id="203122.Sde_2662"/>
<dbReference type="GeneID" id="98614320"/>
<dbReference type="KEGG" id="sde:Sde_2662"/>
<dbReference type="eggNOG" id="COG3705">
    <property type="taxonomic scope" value="Bacteria"/>
</dbReference>
<dbReference type="HOGENOM" id="CLU_025113_0_1_6"/>
<dbReference type="OrthoDB" id="9769617at2"/>
<dbReference type="UniPathway" id="UPA00031">
    <property type="reaction ID" value="UER00006"/>
</dbReference>
<dbReference type="Proteomes" id="UP000001947">
    <property type="component" value="Chromosome"/>
</dbReference>
<dbReference type="GO" id="GO:0005737">
    <property type="term" value="C:cytoplasm"/>
    <property type="evidence" value="ECO:0007669"/>
    <property type="project" value="UniProtKB-SubCell"/>
</dbReference>
<dbReference type="GO" id="GO:0004821">
    <property type="term" value="F:histidine-tRNA ligase activity"/>
    <property type="evidence" value="ECO:0007669"/>
    <property type="project" value="TreeGrafter"/>
</dbReference>
<dbReference type="GO" id="GO:0006427">
    <property type="term" value="P:histidyl-tRNA aminoacylation"/>
    <property type="evidence" value="ECO:0007669"/>
    <property type="project" value="TreeGrafter"/>
</dbReference>
<dbReference type="GO" id="GO:0000105">
    <property type="term" value="P:L-histidine biosynthetic process"/>
    <property type="evidence" value="ECO:0007669"/>
    <property type="project" value="UniProtKB-UniRule"/>
</dbReference>
<dbReference type="CDD" id="cd00773">
    <property type="entry name" value="HisRS-like_core"/>
    <property type="match status" value="1"/>
</dbReference>
<dbReference type="Gene3D" id="3.30.930.10">
    <property type="entry name" value="Bira Bifunctional Protein, Domain 2"/>
    <property type="match status" value="1"/>
</dbReference>
<dbReference type="HAMAP" id="MF_00125">
    <property type="entry name" value="HisZ"/>
    <property type="match status" value="1"/>
</dbReference>
<dbReference type="InterPro" id="IPR045864">
    <property type="entry name" value="aa-tRNA-synth_II/BPL/LPL"/>
</dbReference>
<dbReference type="InterPro" id="IPR041715">
    <property type="entry name" value="HisRS-like_core"/>
</dbReference>
<dbReference type="InterPro" id="IPR004516">
    <property type="entry name" value="HisRS/HisZ"/>
</dbReference>
<dbReference type="InterPro" id="IPR004517">
    <property type="entry name" value="HisZ"/>
</dbReference>
<dbReference type="NCBIfam" id="TIGR00443">
    <property type="entry name" value="hisZ_biosyn_reg"/>
    <property type="match status" value="1"/>
</dbReference>
<dbReference type="NCBIfam" id="NF008935">
    <property type="entry name" value="PRK12292.1-1"/>
    <property type="match status" value="1"/>
</dbReference>
<dbReference type="NCBIfam" id="NF009086">
    <property type="entry name" value="PRK12421.1"/>
    <property type="match status" value="1"/>
</dbReference>
<dbReference type="PANTHER" id="PTHR43707:SF1">
    <property type="entry name" value="HISTIDINE--TRNA LIGASE, MITOCHONDRIAL-RELATED"/>
    <property type="match status" value="1"/>
</dbReference>
<dbReference type="PANTHER" id="PTHR43707">
    <property type="entry name" value="HISTIDYL-TRNA SYNTHETASE"/>
    <property type="match status" value="1"/>
</dbReference>
<dbReference type="Pfam" id="PF13393">
    <property type="entry name" value="tRNA-synt_His"/>
    <property type="match status" value="1"/>
</dbReference>
<dbReference type="PIRSF" id="PIRSF001549">
    <property type="entry name" value="His-tRNA_synth"/>
    <property type="match status" value="1"/>
</dbReference>
<dbReference type="SUPFAM" id="SSF55681">
    <property type="entry name" value="Class II aaRS and biotin synthetases"/>
    <property type="match status" value="1"/>
</dbReference>
<feature type="chain" id="PRO_0000242857" description="ATP phosphoribosyltransferase regulatory subunit">
    <location>
        <begin position="1"/>
        <end position="394"/>
    </location>
</feature>
<organism>
    <name type="scientific">Saccharophagus degradans (strain 2-40 / ATCC 43961 / DSM 17024)</name>
    <dbReference type="NCBI Taxonomy" id="203122"/>
    <lineage>
        <taxon>Bacteria</taxon>
        <taxon>Pseudomonadati</taxon>
        <taxon>Pseudomonadota</taxon>
        <taxon>Gammaproteobacteria</taxon>
        <taxon>Cellvibrionales</taxon>
        <taxon>Cellvibrionaceae</taxon>
        <taxon>Saccharophagus</taxon>
    </lineage>
</organism>
<proteinExistence type="inferred from homology"/>
<protein>
    <recommendedName>
        <fullName evidence="1">ATP phosphoribosyltransferase regulatory subunit</fullName>
    </recommendedName>
</protein>
<accession>Q21HA7</accession>
<gene>
    <name evidence="1" type="primary">hisZ</name>
    <name type="ordered locus">Sde_2662</name>
</gene>
<comment type="function">
    <text evidence="1">Required for the first step of histidine biosynthesis. May allow the feedback regulation of ATP phosphoribosyltransferase activity by histidine.</text>
</comment>
<comment type="pathway">
    <text evidence="1">Amino-acid biosynthesis; L-histidine biosynthesis; L-histidine from 5-phospho-alpha-D-ribose 1-diphosphate: step 1/9.</text>
</comment>
<comment type="subunit">
    <text evidence="1">Heteromultimer composed of HisG and HisZ subunits.</text>
</comment>
<comment type="subcellular location">
    <subcellularLocation>
        <location evidence="1">Cytoplasm</location>
    </subcellularLocation>
</comment>
<comment type="miscellaneous">
    <text>This function is generally fulfilled by the C-terminal part of HisG, which is missing in some bacteria such as this one.</text>
</comment>
<comment type="similarity">
    <text evidence="1">Belongs to the class-II aminoacyl-tRNA synthetase family. HisZ subfamily.</text>
</comment>
<keyword id="KW-0028">Amino-acid biosynthesis</keyword>
<keyword id="KW-0963">Cytoplasm</keyword>
<keyword id="KW-0368">Histidine biosynthesis</keyword>
<keyword id="KW-1185">Reference proteome</keyword>